<proteinExistence type="inferred from homology"/>
<keyword id="KW-0687">Ribonucleoprotein</keyword>
<keyword id="KW-0689">Ribosomal protein</keyword>
<keyword id="KW-0694">RNA-binding</keyword>
<keyword id="KW-0699">rRNA-binding</keyword>
<name>RL6_LACH4</name>
<evidence type="ECO:0000255" key="1">
    <source>
        <dbReference type="HAMAP-Rule" id="MF_01365"/>
    </source>
</evidence>
<evidence type="ECO:0000305" key="2"/>
<accession>A8YXM0</accession>
<protein>
    <recommendedName>
        <fullName evidence="1">Large ribosomal subunit protein uL6</fullName>
    </recommendedName>
    <alternativeName>
        <fullName evidence="2">50S ribosomal protein L6</fullName>
    </alternativeName>
</protein>
<reference key="1">
    <citation type="journal article" date="2008" name="J. Bacteriol.">
        <title>Genome sequence of Lactobacillus helveticus: an organism distinguished by selective gene loss and IS element expansion.</title>
        <authorList>
            <person name="Callanan M."/>
            <person name="Kaleta P."/>
            <person name="O'Callaghan J."/>
            <person name="O'Sullivan O."/>
            <person name="Jordan K."/>
            <person name="McAuliffe O."/>
            <person name="Sangrador-Vegas A."/>
            <person name="Slattery L."/>
            <person name="Fitzgerald G.F."/>
            <person name="Beresford T."/>
            <person name="Ross R.P."/>
        </authorList>
    </citation>
    <scope>NUCLEOTIDE SEQUENCE [LARGE SCALE GENOMIC DNA]</scope>
    <source>
        <strain>DPC 4571</strain>
    </source>
</reference>
<sequence length="176" mass="19159">MSRIGLKTIEVPDSVTVTKDGDNITVKGPKGELTRYFDPKITFEQKDGEINFSRSSESDKALHGTERANLASMIEGVVNGYKKTLKLIGVGYRAQAQGNKVTLNVGYSHPVVLTAPEGVTVKATSATDVEVEGVSKQDVGQFAAEIRAVRPPEPYKGKGIRYVDEYVRRKEGKTGK</sequence>
<dbReference type="EMBL" id="CP000517">
    <property type="protein sequence ID" value="ABX26551.1"/>
    <property type="molecule type" value="Genomic_DNA"/>
</dbReference>
<dbReference type="RefSeq" id="WP_012211383.1">
    <property type="nucleotide sequence ID" value="NC_010080.1"/>
</dbReference>
<dbReference type="SMR" id="A8YXM0"/>
<dbReference type="KEGG" id="lhe:lhv_0327"/>
<dbReference type="eggNOG" id="COG0097">
    <property type="taxonomic scope" value="Bacteria"/>
</dbReference>
<dbReference type="HOGENOM" id="CLU_065464_1_2_9"/>
<dbReference type="Proteomes" id="UP000000790">
    <property type="component" value="Chromosome"/>
</dbReference>
<dbReference type="GO" id="GO:0022625">
    <property type="term" value="C:cytosolic large ribosomal subunit"/>
    <property type="evidence" value="ECO:0007669"/>
    <property type="project" value="TreeGrafter"/>
</dbReference>
<dbReference type="GO" id="GO:0019843">
    <property type="term" value="F:rRNA binding"/>
    <property type="evidence" value="ECO:0007669"/>
    <property type="project" value="UniProtKB-UniRule"/>
</dbReference>
<dbReference type="GO" id="GO:0003735">
    <property type="term" value="F:structural constituent of ribosome"/>
    <property type="evidence" value="ECO:0007669"/>
    <property type="project" value="InterPro"/>
</dbReference>
<dbReference type="GO" id="GO:0002181">
    <property type="term" value="P:cytoplasmic translation"/>
    <property type="evidence" value="ECO:0007669"/>
    <property type="project" value="TreeGrafter"/>
</dbReference>
<dbReference type="FunFam" id="3.90.930.12:FF:000001">
    <property type="entry name" value="50S ribosomal protein L6"/>
    <property type="match status" value="1"/>
</dbReference>
<dbReference type="Gene3D" id="3.90.930.12">
    <property type="entry name" value="Ribosomal protein L6, alpha-beta domain"/>
    <property type="match status" value="2"/>
</dbReference>
<dbReference type="HAMAP" id="MF_01365_B">
    <property type="entry name" value="Ribosomal_uL6_B"/>
    <property type="match status" value="1"/>
</dbReference>
<dbReference type="InterPro" id="IPR000702">
    <property type="entry name" value="Ribosomal_uL6-like"/>
</dbReference>
<dbReference type="InterPro" id="IPR036789">
    <property type="entry name" value="Ribosomal_uL6-like_a/b-dom_sf"/>
</dbReference>
<dbReference type="InterPro" id="IPR020040">
    <property type="entry name" value="Ribosomal_uL6_a/b-dom"/>
</dbReference>
<dbReference type="InterPro" id="IPR019906">
    <property type="entry name" value="Ribosomal_uL6_bac-type"/>
</dbReference>
<dbReference type="InterPro" id="IPR002358">
    <property type="entry name" value="Ribosomal_uL6_CS"/>
</dbReference>
<dbReference type="NCBIfam" id="TIGR03654">
    <property type="entry name" value="L6_bact"/>
    <property type="match status" value="1"/>
</dbReference>
<dbReference type="PANTHER" id="PTHR11655">
    <property type="entry name" value="60S/50S RIBOSOMAL PROTEIN L6/L9"/>
    <property type="match status" value="1"/>
</dbReference>
<dbReference type="PANTHER" id="PTHR11655:SF14">
    <property type="entry name" value="LARGE RIBOSOMAL SUBUNIT PROTEIN UL6M"/>
    <property type="match status" value="1"/>
</dbReference>
<dbReference type="Pfam" id="PF00347">
    <property type="entry name" value="Ribosomal_L6"/>
    <property type="match status" value="2"/>
</dbReference>
<dbReference type="PIRSF" id="PIRSF002162">
    <property type="entry name" value="Ribosomal_L6"/>
    <property type="match status" value="1"/>
</dbReference>
<dbReference type="PRINTS" id="PR00059">
    <property type="entry name" value="RIBOSOMALL6"/>
</dbReference>
<dbReference type="SUPFAM" id="SSF56053">
    <property type="entry name" value="Ribosomal protein L6"/>
    <property type="match status" value="2"/>
</dbReference>
<dbReference type="PROSITE" id="PS00525">
    <property type="entry name" value="RIBOSOMAL_L6_1"/>
    <property type="match status" value="1"/>
</dbReference>
<organism>
    <name type="scientific">Lactobacillus helveticus (strain DPC 4571)</name>
    <dbReference type="NCBI Taxonomy" id="405566"/>
    <lineage>
        <taxon>Bacteria</taxon>
        <taxon>Bacillati</taxon>
        <taxon>Bacillota</taxon>
        <taxon>Bacilli</taxon>
        <taxon>Lactobacillales</taxon>
        <taxon>Lactobacillaceae</taxon>
        <taxon>Lactobacillus</taxon>
    </lineage>
</organism>
<feature type="chain" id="PRO_1000073404" description="Large ribosomal subunit protein uL6">
    <location>
        <begin position="1"/>
        <end position="176"/>
    </location>
</feature>
<comment type="function">
    <text evidence="1">This protein binds to the 23S rRNA, and is important in its secondary structure. It is located near the subunit interface in the base of the L7/L12 stalk, and near the tRNA binding site of the peptidyltransferase center.</text>
</comment>
<comment type="subunit">
    <text evidence="1">Part of the 50S ribosomal subunit.</text>
</comment>
<comment type="similarity">
    <text evidence="1">Belongs to the universal ribosomal protein uL6 family.</text>
</comment>
<gene>
    <name evidence="1" type="primary">rplF</name>
    <name type="ordered locus">lhv_0327</name>
</gene>